<protein>
    <recommendedName>
        <fullName>C-type natriuretic peptide 1</fullName>
    </recommendedName>
</protein>
<gene>
    <name evidence="8" type="primary">cnp-1</name>
</gene>
<evidence type="ECO:0000250" key="1"/>
<evidence type="ECO:0000250" key="2">
    <source>
        <dbReference type="UniProtKB" id="P18145"/>
    </source>
</evidence>
<evidence type="ECO:0000255" key="3"/>
<evidence type="ECO:0000255" key="4">
    <source>
        <dbReference type="RuleBase" id="RU003686"/>
    </source>
</evidence>
<evidence type="ECO:0000269" key="5">
    <source>
    </source>
</evidence>
<evidence type="ECO:0000303" key="6">
    <source>
    </source>
</evidence>
<evidence type="ECO:0000305" key="7"/>
<evidence type="ECO:0000312" key="8">
    <source>
        <dbReference type="EMBL" id="BAC15760.1"/>
    </source>
</evidence>
<comment type="function">
    <text evidence="2 5 6">Exhibits natriuretic and vasodepressant activity. Has cGMP-stimulating activity. May help to regulate body fluid homeostasis in a variety of aquatic environments.</text>
</comment>
<comment type="subcellular location">
    <subcellularLocation>
        <location>Secreted</location>
    </subcellularLocation>
</comment>
<comment type="tissue specificity">
    <text evidence="5">Brain and spinal cord.</text>
</comment>
<comment type="similarity">
    <text evidence="4">Belongs to the natriuretic peptide family.</text>
</comment>
<dbReference type="EMBL" id="AB081455">
    <property type="protein sequence ID" value="BAC15760.1"/>
    <property type="molecule type" value="mRNA"/>
</dbReference>
<dbReference type="FunCoup" id="Q8AYR6">
    <property type="interactions" value="9"/>
</dbReference>
<dbReference type="STRING" id="8090.ENSORLP00000015276"/>
<dbReference type="Ensembl" id="ENSORLT00000015277.2">
    <property type="protein sequence ID" value="ENSORLP00000015276.1"/>
    <property type="gene ID" value="ENSORLG00000012204.2"/>
</dbReference>
<dbReference type="Ensembl" id="ENSORLT00020007879.1">
    <property type="protein sequence ID" value="ENSORLP00020024081.1"/>
    <property type="gene ID" value="ENSORLG00020005280.1"/>
</dbReference>
<dbReference type="KEGG" id="ola:100049271"/>
<dbReference type="CTD" id="563937"/>
<dbReference type="eggNOG" id="ENOG502S2D6">
    <property type="taxonomic scope" value="Eukaryota"/>
</dbReference>
<dbReference type="GeneTree" id="ENSGT00390000015492"/>
<dbReference type="HOGENOM" id="CLU_1948182_0_0_1"/>
<dbReference type="InParanoid" id="Q8AYR6"/>
<dbReference type="OMA" id="EFPKWAD"/>
<dbReference type="OrthoDB" id="9387790at2759"/>
<dbReference type="TreeFam" id="TF106305"/>
<dbReference type="Proteomes" id="UP000001038">
    <property type="component" value="Chromosome 16"/>
</dbReference>
<dbReference type="Proteomes" id="UP000265180">
    <property type="component" value="Chromosome 16"/>
</dbReference>
<dbReference type="Proteomes" id="UP000265200">
    <property type="component" value="Unplaced"/>
</dbReference>
<dbReference type="Bgee" id="ENSORLG00000012204">
    <property type="expression patterns" value="Expressed in brain and 8 other cell types or tissues"/>
</dbReference>
<dbReference type="GO" id="GO:0005576">
    <property type="term" value="C:extracellular region"/>
    <property type="evidence" value="ECO:0007669"/>
    <property type="project" value="UniProtKB-SubCell"/>
</dbReference>
<dbReference type="GO" id="GO:0005179">
    <property type="term" value="F:hormone activity"/>
    <property type="evidence" value="ECO:0000318"/>
    <property type="project" value="GO_Central"/>
</dbReference>
<dbReference type="GO" id="GO:0051427">
    <property type="term" value="F:hormone receptor binding"/>
    <property type="evidence" value="ECO:0000318"/>
    <property type="project" value="GO_Central"/>
</dbReference>
<dbReference type="GO" id="GO:0097746">
    <property type="term" value="P:blood vessel diameter maintenance"/>
    <property type="evidence" value="ECO:0007669"/>
    <property type="project" value="UniProtKB-KW"/>
</dbReference>
<dbReference type="GO" id="GO:0006182">
    <property type="term" value="P:cGMP biosynthetic process"/>
    <property type="evidence" value="ECO:0000318"/>
    <property type="project" value="GO_Central"/>
</dbReference>
<dbReference type="GO" id="GO:0007168">
    <property type="term" value="P:receptor guanylyl cyclase signaling pathway"/>
    <property type="evidence" value="ECO:0000318"/>
    <property type="project" value="GO_Central"/>
</dbReference>
<dbReference type="InterPro" id="IPR002406">
    <property type="entry name" value="C_natriurtcpep"/>
</dbReference>
<dbReference type="InterPro" id="IPR000663">
    <property type="entry name" value="Natr_peptide"/>
</dbReference>
<dbReference type="InterPro" id="IPR030480">
    <property type="entry name" value="Natr_peptide_CS"/>
</dbReference>
<dbReference type="PANTHER" id="PTHR12167">
    <property type="entry name" value="C-TYPE NATRIURETIC PEPTIDE"/>
    <property type="match status" value="1"/>
</dbReference>
<dbReference type="PANTHER" id="PTHR12167:SF4">
    <property type="entry name" value="NATRIURETIC PEPTIDE C-LIKE PROTEIN"/>
    <property type="match status" value="1"/>
</dbReference>
<dbReference type="Pfam" id="PF00212">
    <property type="entry name" value="ANP"/>
    <property type="match status" value="1"/>
</dbReference>
<dbReference type="PRINTS" id="PR00713">
    <property type="entry name" value="CNATPEPTIDE"/>
</dbReference>
<dbReference type="PRINTS" id="PR00710">
    <property type="entry name" value="NATPEPTIDES"/>
</dbReference>
<dbReference type="SMART" id="SM00183">
    <property type="entry name" value="NAT_PEP"/>
    <property type="match status" value="1"/>
</dbReference>
<dbReference type="PROSITE" id="PS00263">
    <property type="entry name" value="NATRIURETIC_PEPTIDE"/>
    <property type="match status" value="1"/>
</dbReference>
<organism>
    <name type="scientific">Oryzias latipes</name>
    <name type="common">Japanese rice fish</name>
    <name type="synonym">Japanese killifish</name>
    <dbReference type="NCBI Taxonomy" id="8090"/>
    <lineage>
        <taxon>Eukaryota</taxon>
        <taxon>Metazoa</taxon>
        <taxon>Chordata</taxon>
        <taxon>Craniata</taxon>
        <taxon>Vertebrata</taxon>
        <taxon>Euteleostomi</taxon>
        <taxon>Actinopterygii</taxon>
        <taxon>Neopterygii</taxon>
        <taxon>Teleostei</taxon>
        <taxon>Neoteleostei</taxon>
        <taxon>Acanthomorphata</taxon>
        <taxon>Ovalentaria</taxon>
        <taxon>Atherinomorphae</taxon>
        <taxon>Beloniformes</taxon>
        <taxon>Adrianichthyidae</taxon>
        <taxon>Oryziinae</taxon>
        <taxon>Oryzias</taxon>
    </lineage>
</organism>
<feature type="signal peptide" evidence="3">
    <location>
        <begin position="1"/>
        <end position="22"/>
    </location>
</feature>
<feature type="propeptide" id="PRO_0000001593" evidence="1">
    <location>
        <begin position="23"/>
        <end position="109"/>
    </location>
</feature>
<feature type="peptide" id="PRO_0000001594" description="C-type natriuretic peptide 1">
    <location>
        <begin position="110"/>
        <end position="131"/>
    </location>
</feature>
<feature type="disulfide bond" evidence="2">
    <location>
        <begin position="115"/>
        <end position="131"/>
    </location>
</feature>
<name>ANFC1_ORYLA</name>
<keyword id="KW-0165">Cleavage on pair of basic residues</keyword>
<keyword id="KW-1015">Disulfide bond</keyword>
<keyword id="KW-0372">Hormone</keyword>
<keyword id="KW-1185">Reference proteome</keyword>
<keyword id="KW-0964">Secreted</keyword>
<keyword id="KW-0732">Signal</keyword>
<keyword id="KW-0838">Vasoactive</keyword>
<sequence length="131" mass="14753">MLCPVLLCATLLLLTPFEVTEARALHPSADAVQFVEQFLDRYNDLLTLDDLENLLNTQPEEQSTLSSGVKTAEYPKWADLQTQPETPWFRLLKGALTNQKRAEPDRSRRGWNRGCFGLKLDRIGSMSGLGC</sequence>
<proteinExistence type="evidence at transcript level"/>
<accession>Q8AYR6</accession>
<reference evidence="7 8" key="1">
    <citation type="journal article" date="2003" name="Proc. Natl. Acad. Sci. U.S.A.">
        <title>Four functionally distinct C-type natriuretic peptides found in fish reveal evolutionary history of the natriuretic peptide system.</title>
        <authorList>
            <person name="Inoue K."/>
            <person name="Naruse K."/>
            <person name="Yamagami S."/>
            <person name="Mitani H."/>
            <person name="Suzuki N."/>
            <person name="Takei Y."/>
        </authorList>
    </citation>
    <scope>NUCLEOTIDE SEQUENCE [MRNA]</scope>
    <scope>FUNCTION</scope>
    <scope>TISSUE SPECIFICITY</scope>
    <scope>SYNTHESIS</scope>
    <source>
        <tissue evidence="5">Brain</tissue>
    </source>
</reference>